<reference key="1">
    <citation type="journal article" date="1996" name="Science">
        <title>Complete genome sequence of the methanogenic archaeon, Methanococcus jannaschii.</title>
        <authorList>
            <person name="Bult C.J."/>
            <person name="White O."/>
            <person name="Olsen G.J."/>
            <person name="Zhou L."/>
            <person name="Fleischmann R.D."/>
            <person name="Sutton G.G."/>
            <person name="Blake J.A."/>
            <person name="FitzGerald L.M."/>
            <person name="Clayton R.A."/>
            <person name="Gocayne J.D."/>
            <person name="Kerlavage A.R."/>
            <person name="Dougherty B.A."/>
            <person name="Tomb J.-F."/>
            <person name="Adams M.D."/>
            <person name="Reich C.I."/>
            <person name="Overbeek R."/>
            <person name="Kirkness E.F."/>
            <person name="Weinstock K.G."/>
            <person name="Merrick J.M."/>
            <person name="Glodek A."/>
            <person name="Scott J.L."/>
            <person name="Geoghagen N.S.M."/>
            <person name="Weidman J.F."/>
            <person name="Fuhrmann J.L."/>
            <person name="Nguyen D."/>
            <person name="Utterback T.R."/>
            <person name="Kelley J.M."/>
            <person name="Peterson J.D."/>
            <person name="Sadow P.W."/>
            <person name="Hanna M.C."/>
            <person name="Cotton M.D."/>
            <person name="Roberts K.M."/>
            <person name="Hurst M.A."/>
            <person name="Kaine B.P."/>
            <person name="Borodovsky M."/>
            <person name="Klenk H.-P."/>
            <person name="Fraser C.M."/>
            <person name="Smith H.O."/>
            <person name="Woese C.R."/>
            <person name="Venter J.C."/>
        </authorList>
    </citation>
    <scope>NUCLEOTIDE SEQUENCE [LARGE SCALE GENOMIC DNA]</scope>
    <source>
        <strain>ATCC 43067 / DSM 2661 / JAL-1 / JCM 10045 / NBRC 100440</strain>
    </source>
</reference>
<accession>Q58734</accession>
<dbReference type="EMBL" id="L77117">
    <property type="protein sequence ID" value="AAB99348.1"/>
    <property type="molecule type" value="Genomic_DNA"/>
</dbReference>
<dbReference type="PIR" id="A64467">
    <property type="entry name" value="A64467"/>
</dbReference>
<dbReference type="PDB" id="4YT2">
    <property type="method" value="X-ray"/>
    <property type="resolution" value="1.65 A"/>
    <property type="chains" value="A/B=8-353"/>
</dbReference>
<dbReference type="PDB" id="4YT4">
    <property type="method" value="X-ray"/>
    <property type="resolution" value="2.20 A"/>
    <property type="chains" value="A=1-353"/>
</dbReference>
<dbReference type="PDB" id="4YT5">
    <property type="method" value="X-ray"/>
    <property type="resolution" value="1.90 A"/>
    <property type="chains" value="A/B=1-353"/>
</dbReference>
<dbReference type="PDB" id="4YT8">
    <property type="method" value="X-ray"/>
    <property type="resolution" value="1.90 A"/>
    <property type="chains" value="A/B=1-353"/>
</dbReference>
<dbReference type="PDB" id="6HUX">
    <property type="method" value="X-ray"/>
    <property type="resolution" value="2.50 A"/>
    <property type="chains" value="A=1-353"/>
</dbReference>
<dbReference type="PDBsum" id="4YT2"/>
<dbReference type="PDBsum" id="4YT4"/>
<dbReference type="PDBsum" id="4YT5"/>
<dbReference type="PDBsum" id="4YT8"/>
<dbReference type="PDBsum" id="6HUX"/>
<dbReference type="SMR" id="Q58734"/>
<dbReference type="STRING" id="243232.MJ_1338"/>
<dbReference type="PaxDb" id="243232-MJ_1338"/>
<dbReference type="EnsemblBacteria" id="AAB99348">
    <property type="protein sequence ID" value="AAB99348"/>
    <property type="gene ID" value="MJ_1338"/>
</dbReference>
<dbReference type="KEGG" id="mja:MJ_1338"/>
<dbReference type="eggNOG" id="arCOG03195">
    <property type="taxonomic scope" value="Archaea"/>
</dbReference>
<dbReference type="HOGENOM" id="CLU_069755_0_0_2"/>
<dbReference type="InParanoid" id="Q58734"/>
<dbReference type="PhylomeDB" id="Q58734"/>
<dbReference type="EvolutionaryTrace" id="Q58734"/>
<dbReference type="Proteomes" id="UP000000805">
    <property type="component" value="Chromosome"/>
</dbReference>
<dbReference type="GO" id="GO:0016491">
    <property type="term" value="F:oxidoreductase activity"/>
    <property type="evidence" value="ECO:0007669"/>
    <property type="project" value="UniProtKB-KW"/>
</dbReference>
<dbReference type="Gene3D" id="1.20.120.1300">
    <property type="entry name" value="Hmd, C-terminal helical subdomain"/>
    <property type="match status" value="1"/>
</dbReference>
<dbReference type="Gene3D" id="3.40.50.720">
    <property type="entry name" value="NAD(P)-binding Rossmann-like Domain"/>
    <property type="match status" value="1"/>
</dbReference>
<dbReference type="InterPro" id="IPR008927">
    <property type="entry name" value="6-PGluconate_DH-like_C_sf"/>
</dbReference>
<dbReference type="InterPro" id="IPR004889">
    <property type="entry name" value="HMD_C"/>
</dbReference>
<dbReference type="InterPro" id="IPR038182">
    <property type="entry name" value="HMD_C_sf"/>
</dbReference>
<dbReference type="InterPro" id="IPR055205">
    <property type="entry name" value="HMD_N"/>
</dbReference>
<dbReference type="InterPro" id="IPR010063">
    <property type="entry name" value="HMDII/III"/>
</dbReference>
<dbReference type="InterPro" id="IPR024190">
    <property type="entry name" value="METHMP_Hmd"/>
</dbReference>
<dbReference type="InterPro" id="IPR036291">
    <property type="entry name" value="NAD(P)-bd_dom_sf"/>
</dbReference>
<dbReference type="NCBIfam" id="TIGR01724">
    <property type="entry name" value="hmd_rel"/>
    <property type="match status" value="1"/>
</dbReference>
<dbReference type="NCBIfam" id="NF009208">
    <property type="entry name" value="PRK12557.1"/>
    <property type="match status" value="1"/>
</dbReference>
<dbReference type="Pfam" id="PF03201">
    <property type="entry name" value="HMD"/>
    <property type="match status" value="1"/>
</dbReference>
<dbReference type="Pfam" id="PF22616">
    <property type="entry name" value="HMD_N"/>
    <property type="match status" value="1"/>
</dbReference>
<dbReference type="PIRSF" id="PIRSF016158">
    <property type="entry name" value="HMD"/>
    <property type="match status" value="1"/>
</dbReference>
<dbReference type="PIRSF" id="PIRSF500166">
    <property type="entry name" value="HMDII_III"/>
    <property type="match status" value="1"/>
</dbReference>
<dbReference type="SUPFAM" id="SSF48179">
    <property type="entry name" value="6-phosphogluconate dehydrogenase C-terminal domain-like"/>
    <property type="match status" value="1"/>
</dbReference>
<dbReference type="SUPFAM" id="SSF51735">
    <property type="entry name" value="NAD(P)-binding Rossmann-fold domains"/>
    <property type="match status" value="1"/>
</dbReference>
<gene>
    <name type="ordered locus">MJ1338</name>
</gene>
<evidence type="ECO:0000305" key="1"/>
<evidence type="ECO:0007829" key="2">
    <source>
        <dbReference type="PDB" id="4YT2"/>
    </source>
</evidence>
<evidence type="ECO:0007829" key="3">
    <source>
        <dbReference type="PDB" id="6HUX"/>
    </source>
</evidence>
<comment type="similarity">
    <text evidence="1">Belongs to the HMD family.</text>
</comment>
<keyword id="KW-0002">3D-structure</keyword>
<keyword id="KW-0560">Oxidoreductase</keyword>
<keyword id="KW-1185">Reference proteome</keyword>
<proteinExistence type="evidence at protein level"/>
<sequence length="353" mass="38212">MRNIRKIKVDNMKVSVYGAGNQNLYINKLNLPEKFGGEPPYGGSRMAIEFAEAGHDVVLAEPNKNIMSDDLWKKVEDAGVKVVSDDVEAAKHGEIHVLFTPFGKATFRIAKTIIEHVPENAVICNTCTVSPVVLYYSLEPILRTKRKDVGISSMHPAAVPGTPQHGHYVIGGKTTDGKELATEEQIKKAVELAKSAGKEAYVVPADVSSVVADMGSLVTAVALSGVLDYYTVGRKIINAPKKMIEQQVIMTLQTMASLVETSGIEGMVKALNPELLIRSASSMKLLDRQKDLDAALEILQNLDETLKAEVEKAEIKPTTLVAAQSLVKEIKTLIGGAAAEGAIKRSARKLFEH</sequence>
<organism>
    <name type="scientific">Methanocaldococcus jannaschii (strain ATCC 43067 / DSM 2661 / JAL-1 / JCM 10045 / NBRC 100440)</name>
    <name type="common">Methanococcus jannaschii</name>
    <dbReference type="NCBI Taxonomy" id="243232"/>
    <lineage>
        <taxon>Archaea</taxon>
        <taxon>Methanobacteriati</taxon>
        <taxon>Methanobacteriota</taxon>
        <taxon>Methanomada group</taxon>
        <taxon>Methanococci</taxon>
        <taxon>Methanococcales</taxon>
        <taxon>Methanocaldococcaceae</taxon>
        <taxon>Methanocaldococcus</taxon>
    </lineage>
</organism>
<protein>
    <recommendedName>
        <fullName>H(2)-forming methylenetetrahydromethanopterin dehydrogenase-related protein MJ1338</fullName>
    </recommendedName>
</protein>
<feature type="chain" id="PRO_0000218518" description="H(2)-forming methylenetetrahydromethanopterin dehydrogenase-related protein MJ1338">
    <location>
        <begin position="1"/>
        <end position="353"/>
    </location>
</feature>
<feature type="helix" evidence="3">
    <location>
        <begin position="4"/>
        <end position="10"/>
    </location>
</feature>
<feature type="strand" evidence="2">
    <location>
        <begin position="13"/>
        <end position="17"/>
    </location>
</feature>
<feature type="helix" evidence="2">
    <location>
        <begin position="22"/>
        <end position="26"/>
    </location>
</feature>
<feature type="helix" evidence="2">
    <location>
        <begin position="31"/>
        <end position="34"/>
    </location>
</feature>
<feature type="helix" evidence="2">
    <location>
        <begin position="43"/>
        <end position="52"/>
    </location>
</feature>
<feature type="strand" evidence="2">
    <location>
        <begin position="56"/>
        <end position="60"/>
    </location>
</feature>
<feature type="helix" evidence="2">
    <location>
        <begin position="64"/>
        <end position="66"/>
    </location>
</feature>
<feature type="helix" evidence="2">
    <location>
        <begin position="69"/>
        <end position="77"/>
    </location>
</feature>
<feature type="strand" evidence="2">
    <location>
        <begin position="81"/>
        <end position="84"/>
    </location>
</feature>
<feature type="helix" evidence="2">
    <location>
        <begin position="86"/>
        <end position="92"/>
    </location>
</feature>
<feature type="strand" evidence="2">
    <location>
        <begin position="94"/>
        <end position="98"/>
    </location>
</feature>
<feature type="turn" evidence="2">
    <location>
        <begin position="102"/>
        <end position="104"/>
    </location>
</feature>
<feature type="helix" evidence="2">
    <location>
        <begin position="105"/>
        <end position="114"/>
    </location>
</feature>
<feature type="strand" evidence="2">
    <location>
        <begin position="122"/>
        <end position="125"/>
    </location>
</feature>
<feature type="strand" evidence="2">
    <location>
        <begin position="127"/>
        <end position="129"/>
    </location>
</feature>
<feature type="helix" evidence="2">
    <location>
        <begin position="131"/>
        <end position="142"/>
    </location>
</feature>
<feature type="turn" evidence="2">
    <location>
        <begin position="143"/>
        <end position="148"/>
    </location>
</feature>
<feature type="strand" evidence="2">
    <location>
        <begin position="150"/>
        <end position="153"/>
    </location>
</feature>
<feature type="strand" evidence="2">
    <location>
        <begin position="167"/>
        <end position="173"/>
    </location>
</feature>
<feature type="helix" evidence="2">
    <location>
        <begin position="183"/>
        <end position="195"/>
    </location>
</feature>
<feature type="strand" evidence="2">
    <location>
        <begin position="199"/>
        <end position="204"/>
    </location>
</feature>
<feature type="turn" evidence="2">
    <location>
        <begin position="205"/>
        <end position="207"/>
    </location>
</feature>
<feature type="helix" evidence="2">
    <location>
        <begin position="208"/>
        <end position="212"/>
    </location>
</feature>
<feature type="helix" evidence="2">
    <location>
        <begin position="216"/>
        <end position="235"/>
    </location>
</feature>
<feature type="helix" evidence="2">
    <location>
        <begin position="241"/>
        <end position="271"/>
    </location>
</feature>
<feature type="helix" evidence="2">
    <location>
        <begin position="273"/>
        <end position="281"/>
    </location>
</feature>
<feature type="helix" evidence="2">
    <location>
        <begin position="290"/>
        <end position="300"/>
    </location>
</feature>
<feature type="helix" evidence="2">
    <location>
        <begin position="304"/>
        <end position="312"/>
    </location>
</feature>
<feature type="helix" evidence="2">
    <location>
        <begin position="323"/>
        <end position="334"/>
    </location>
</feature>
<feature type="helix" evidence="2">
    <location>
        <begin position="336"/>
        <end position="351"/>
    </location>
</feature>
<name>HMDY_METJA</name>